<reference key="1">
    <citation type="journal article" date="1993" name="J. Gen. Microbiol.">
        <title>Cloning and sequencing of the gene which encodes the highly inducible acetamidase of Mycobacterium smegmatis.</title>
        <authorList>
            <person name="Mahenthiralingam E."/>
            <person name="Draper P."/>
            <person name="Davis E.O."/>
            <person name="Colston M.J."/>
        </authorList>
    </citation>
    <scope>NUCLEOTIDE SEQUENCE [GENOMIC DNA]</scope>
    <source>
        <strain>ATCC 19420 / DSM 43756 / JCM 5866 / KCTC 9108 / NCTC 8159 / NRRL B-14616 / Cornell 3</strain>
    </source>
</reference>
<feature type="chain" id="PRO_0000064583" description="Putative amidate substrates transporter protein">
    <location>
        <begin position="1"/>
        <end position="213"/>
    </location>
</feature>
<feature type="transmembrane region" description="Helical" evidence="2">
    <location>
        <begin position="4"/>
        <end position="20"/>
    </location>
</feature>
<feature type="transmembrane region" description="Helical" evidence="2">
    <location>
        <begin position="32"/>
        <end position="48"/>
    </location>
</feature>
<feature type="transmembrane region" description="Helical" evidence="2">
    <location>
        <begin position="56"/>
        <end position="72"/>
    </location>
</feature>
<feature type="transmembrane region" description="Helical" evidence="2">
    <location>
        <begin position="116"/>
        <end position="132"/>
    </location>
</feature>
<feature type="transmembrane region" description="Helical" evidence="2">
    <location>
        <begin position="146"/>
        <end position="162"/>
    </location>
</feature>
<feature type="transmembrane region" description="Helical" evidence="2">
    <location>
        <begin position="172"/>
        <end position="188"/>
    </location>
</feature>
<sequence>MGGVGLFYVGAVLIIDGLMLLGRISPRGATPLNFFVGGLQVVTPTVLILQSGGDAAVIFAASGLYLFGFTYLWVAINNVTDWDGEGLGWFSLFVAIAALGYSWHAFTAEADPAFGVIWLLWAVLWFMLFLLLGLGHDALGPAVGFVAVAEGVITAAVPAFLIVSGNWETGPLPAAVIAVIGFAAVVLAYPIGRRLAAPSVTNPPPAALAATTR</sequence>
<keyword id="KW-1003">Cell membrane</keyword>
<keyword id="KW-0472">Membrane</keyword>
<keyword id="KW-0812">Transmembrane</keyword>
<keyword id="KW-1133">Transmembrane helix</keyword>
<keyword id="KW-0813">Transport</keyword>
<accession>P56583</accession>
<name>AMIS_MYCSM</name>
<proteinExistence type="inferred from homology"/>
<comment type="function">
    <text evidence="1">Possible transporter that might be responsible for the adsorption of amidase substrates or release of their hydrolysis products.</text>
</comment>
<comment type="subcellular location">
    <subcellularLocation>
        <location evidence="3">Cell membrane</location>
        <topology evidence="3">Multi-pass membrane protein</topology>
    </subcellularLocation>
</comment>
<comment type="similarity">
    <text evidence="3">Belongs to the AmiS/UreI family.</text>
</comment>
<protein>
    <recommendedName>
        <fullName>Putative amidate substrates transporter protein</fullName>
    </recommendedName>
</protein>
<evidence type="ECO:0000250" key="1"/>
<evidence type="ECO:0000255" key="2"/>
<evidence type="ECO:0000305" key="3"/>
<dbReference type="EMBL" id="X57175">
    <property type="status" value="NOT_ANNOTATED_CDS"/>
    <property type="molecule type" value="Genomic_DNA"/>
</dbReference>
<dbReference type="RefSeq" id="WP_011730476.1">
    <property type="nucleotide sequence ID" value="NZ_UGQO01000002.1"/>
</dbReference>
<dbReference type="SMR" id="P56583"/>
<dbReference type="GeneID" id="93459990"/>
<dbReference type="OMA" id="FAFTYLW"/>
<dbReference type="GO" id="GO:0005886">
    <property type="term" value="C:plasma membrane"/>
    <property type="evidence" value="ECO:0007669"/>
    <property type="project" value="UniProtKB-SubCell"/>
</dbReference>
<dbReference type="CDD" id="cd13429">
    <property type="entry name" value="UreI_AmiS_like_2"/>
    <property type="match status" value="1"/>
</dbReference>
<dbReference type="Gene3D" id="1.25.40.600">
    <property type="match status" value="1"/>
</dbReference>
<dbReference type="InterPro" id="IPR003211">
    <property type="entry name" value="AmiSUreI_transpt"/>
</dbReference>
<dbReference type="InterPro" id="IPR038523">
    <property type="entry name" value="AmiSUreI_transpt_sf"/>
</dbReference>
<dbReference type="Pfam" id="PF02293">
    <property type="entry name" value="AmiS_UreI"/>
    <property type="match status" value="1"/>
</dbReference>
<organism>
    <name type="scientific">Mycolicibacterium smegmatis</name>
    <name type="common">Mycobacterium smegmatis</name>
    <dbReference type="NCBI Taxonomy" id="1772"/>
    <lineage>
        <taxon>Bacteria</taxon>
        <taxon>Bacillati</taxon>
        <taxon>Actinomycetota</taxon>
        <taxon>Actinomycetes</taxon>
        <taxon>Mycobacteriales</taxon>
        <taxon>Mycobacteriaceae</taxon>
        <taxon>Mycolicibacterium</taxon>
    </lineage>
</organism>